<gene>
    <name evidence="1" type="primary">sprT</name>
    <name type="ordered locus">PSPPH_3727</name>
</gene>
<keyword id="KW-0963">Cytoplasm</keyword>
<keyword id="KW-0479">Metal-binding</keyword>
<keyword id="KW-0862">Zinc</keyword>
<feature type="chain" id="PRO_1000046530" description="Protein SprT">
    <location>
        <begin position="1"/>
        <end position="164"/>
    </location>
</feature>
<feature type="domain" description="SprT-like" evidence="1">
    <location>
        <begin position="14"/>
        <end position="156"/>
    </location>
</feature>
<feature type="active site" evidence="1">
    <location>
        <position position="70"/>
    </location>
</feature>
<feature type="binding site" evidence="1">
    <location>
        <position position="69"/>
    </location>
    <ligand>
        <name>Zn(2+)</name>
        <dbReference type="ChEBI" id="CHEBI:29105"/>
    </ligand>
</feature>
<feature type="binding site" evidence="1">
    <location>
        <position position="73"/>
    </location>
    <ligand>
        <name>Zn(2+)</name>
        <dbReference type="ChEBI" id="CHEBI:29105"/>
    </ligand>
</feature>
<comment type="cofactor">
    <cofactor evidence="1">
        <name>Zn(2+)</name>
        <dbReference type="ChEBI" id="CHEBI:29105"/>
    </cofactor>
    <text evidence="1">Binds 1 zinc ion.</text>
</comment>
<comment type="subcellular location">
    <subcellularLocation>
        <location evidence="1">Cytoplasm</location>
    </subcellularLocation>
</comment>
<comment type="similarity">
    <text evidence="1">Belongs to the SprT family.</text>
</comment>
<organism>
    <name type="scientific">Pseudomonas savastanoi pv. phaseolicola (strain 1448A / Race 6)</name>
    <name type="common">Pseudomonas syringae pv. phaseolicola (strain 1448A / Race 6)</name>
    <dbReference type="NCBI Taxonomy" id="264730"/>
    <lineage>
        <taxon>Bacteria</taxon>
        <taxon>Pseudomonadati</taxon>
        <taxon>Pseudomonadota</taxon>
        <taxon>Gammaproteobacteria</taxon>
        <taxon>Pseudomonadales</taxon>
        <taxon>Pseudomonadaceae</taxon>
        <taxon>Pseudomonas</taxon>
    </lineage>
</organism>
<dbReference type="EMBL" id="CP000058">
    <property type="protein sequence ID" value="AAZ33777.1"/>
    <property type="molecule type" value="Genomic_DNA"/>
</dbReference>
<dbReference type="RefSeq" id="WP_004657182.1">
    <property type="nucleotide sequence ID" value="NC_005773.3"/>
</dbReference>
<dbReference type="KEGG" id="psp:PSPPH_3727"/>
<dbReference type="eggNOG" id="COG3091">
    <property type="taxonomic scope" value="Bacteria"/>
</dbReference>
<dbReference type="HOGENOM" id="CLU_113336_0_1_6"/>
<dbReference type="Proteomes" id="UP000000551">
    <property type="component" value="Chromosome"/>
</dbReference>
<dbReference type="GO" id="GO:0005737">
    <property type="term" value="C:cytoplasm"/>
    <property type="evidence" value="ECO:0007669"/>
    <property type="project" value="UniProtKB-SubCell"/>
</dbReference>
<dbReference type="GO" id="GO:0008270">
    <property type="term" value="F:zinc ion binding"/>
    <property type="evidence" value="ECO:0007669"/>
    <property type="project" value="UniProtKB-UniRule"/>
</dbReference>
<dbReference type="GO" id="GO:0006950">
    <property type="term" value="P:response to stress"/>
    <property type="evidence" value="ECO:0007669"/>
    <property type="project" value="UniProtKB-ARBA"/>
</dbReference>
<dbReference type="HAMAP" id="MF_00746">
    <property type="entry name" value="SprT"/>
    <property type="match status" value="1"/>
</dbReference>
<dbReference type="InterPro" id="IPR006640">
    <property type="entry name" value="SprT-like_domain"/>
</dbReference>
<dbReference type="InterPro" id="IPR023483">
    <property type="entry name" value="Uncharacterised_SprT"/>
</dbReference>
<dbReference type="NCBIfam" id="NF003421">
    <property type="entry name" value="PRK04860.1"/>
    <property type="match status" value="1"/>
</dbReference>
<dbReference type="PANTHER" id="PTHR38773">
    <property type="entry name" value="PROTEIN SPRT"/>
    <property type="match status" value="1"/>
</dbReference>
<dbReference type="PANTHER" id="PTHR38773:SF1">
    <property type="entry name" value="PROTEIN SPRT"/>
    <property type="match status" value="1"/>
</dbReference>
<dbReference type="Pfam" id="PF10263">
    <property type="entry name" value="SprT-like"/>
    <property type="match status" value="1"/>
</dbReference>
<dbReference type="SMART" id="SM00731">
    <property type="entry name" value="SprT"/>
    <property type="match status" value="1"/>
</dbReference>
<dbReference type="PROSITE" id="PS00142">
    <property type="entry name" value="ZINC_PROTEASE"/>
    <property type="match status" value="1"/>
</dbReference>
<evidence type="ECO:0000255" key="1">
    <source>
        <dbReference type="HAMAP-Rule" id="MF_00746"/>
    </source>
</evidence>
<name>SPRT_PSE14</name>
<reference key="1">
    <citation type="journal article" date="2005" name="J. Bacteriol.">
        <title>Whole-genome sequence analysis of Pseudomonas syringae pv. phaseolicola 1448A reveals divergence among pathovars in genes involved in virulence and transposition.</title>
        <authorList>
            <person name="Joardar V."/>
            <person name="Lindeberg M."/>
            <person name="Jackson R.W."/>
            <person name="Selengut J."/>
            <person name="Dodson R."/>
            <person name="Brinkac L.M."/>
            <person name="Daugherty S.C."/>
            <person name="DeBoy R.T."/>
            <person name="Durkin A.S."/>
            <person name="Gwinn Giglio M."/>
            <person name="Madupu R."/>
            <person name="Nelson W.C."/>
            <person name="Rosovitz M.J."/>
            <person name="Sullivan S.A."/>
            <person name="Crabtree J."/>
            <person name="Creasy T."/>
            <person name="Davidsen T.M."/>
            <person name="Haft D.H."/>
            <person name="Zafar N."/>
            <person name="Zhou L."/>
            <person name="Halpin R."/>
            <person name="Holley T."/>
            <person name="Khouri H.M."/>
            <person name="Feldblyum T.V."/>
            <person name="White O."/>
            <person name="Fraser C.M."/>
            <person name="Chatterjee A.K."/>
            <person name="Cartinhour S."/>
            <person name="Schneider D."/>
            <person name="Mansfield J.W."/>
            <person name="Collmer A."/>
            <person name="Buell R."/>
        </authorList>
    </citation>
    <scope>NUCLEOTIDE SEQUENCE [LARGE SCALE GENOMIC DNA]</scope>
    <source>
        <strain>1448A / Race 6</strain>
    </source>
</reference>
<accession>Q48FG7</accession>
<sequence length="164" mass="19481">MPDQLNSRVETCYQQAETFFKRTFKRPMVSFQLRGQKAGVAHLHENLLRFNPQLYKENAEDFLRQTVPHEVAHLIAHQLFGGSIQPHGEEWQLIMRGVYELPPNRCHTYAVKRRSVIRYIYRCPCPDSDFPFTAQRHSMVRKGRRYLCRRCREPLVFSGETRTE</sequence>
<protein>
    <recommendedName>
        <fullName evidence="1">Protein SprT</fullName>
    </recommendedName>
</protein>
<proteinExistence type="inferred from homology"/>